<proteinExistence type="inferred from homology"/>
<gene>
    <name type="ordered locus">RC0461</name>
</gene>
<organism>
    <name type="scientific">Rickettsia conorii (strain ATCC VR-613 / Malish 7)</name>
    <dbReference type="NCBI Taxonomy" id="272944"/>
    <lineage>
        <taxon>Bacteria</taxon>
        <taxon>Pseudomonadati</taxon>
        <taxon>Pseudomonadota</taxon>
        <taxon>Alphaproteobacteria</taxon>
        <taxon>Rickettsiales</taxon>
        <taxon>Rickettsiaceae</taxon>
        <taxon>Rickettsieae</taxon>
        <taxon>Rickettsia</taxon>
        <taxon>spotted fever group</taxon>
    </lineage>
</organism>
<reference key="1">
    <citation type="journal article" date="2001" name="Science">
        <title>Mechanisms of evolution in Rickettsia conorii and R. prowazekii.</title>
        <authorList>
            <person name="Ogata H."/>
            <person name="Audic S."/>
            <person name="Renesto-Audiffren P."/>
            <person name="Fournier P.-E."/>
            <person name="Barbe V."/>
            <person name="Samson D."/>
            <person name="Roux V."/>
            <person name="Cossart P."/>
            <person name="Weissenbach J."/>
            <person name="Claverie J.-M."/>
            <person name="Raoult D."/>
        </authorList>
    </citation>
    <scope>NUCLEOTIDE SEQUENCE [LARGE SCALE GENOMIC DNA]</scope>
    <source>
        <strain>ATCC VR-613 / Malish 7</strain>
    </source>
</reference>
<accession>Q92IF9</accession>
<feature type="chain" id="PRO_0000268852" description="Uncharacterized glycosyltransferase RC0461">
    <location>
        <begin position="1"/>
        <end position="604"/>
    </location>
</feature>
<comment type="similarity">
    <text evidence="1">Belongs to the glycosyltransferase 2 family.</text>
</comment>
<dbReference type="EC" id="2.4.-.-"/>
<dbReference type="EMBL" id="AE006914">
    <property type="protein sequence ID" value="AAL02999.1"/>
    <property type="molecule type" value="Genomic_DNA"/>
</dbReference>
<dbReference type="PIR" id="E97757">
    <property type="entry name" value="E97757"/>
</dbReference>
<dbReference type="RefSeq" id="WP_010977105.1">
    <property type="nucleotide sequence ID" value="NC_003103.1"/>
</dbReference>
<dbReference type="SMR" id="Q92IF9"/>
<dbReference type="CAZy" id="GT2">
    <property type="family name" value="Glycosyltransferase Family 2"/>
</dbReference>
<dbReference type="GeneID" id="928694"/>
<dbReference type="KEGG" id="rco:RC0461"/>
<dbReference type="PATRIC" id="fig|272944.4.peg.527"/>
<dbReference type="HOGENOM" id="CLU_473176_0_0_5"/>
<dbReference type="Proteomes" id="UP000000816">
    <property type="component" value="Chromosome"/>
</dbReference>
<dbReference type="GO" id="GO:0016758">
    <property type="term" value="F:hexosyltransferase activity"/>
    <property type="evidence" value="ECO:0007669"/>
    <property type="project" value="UniProtKB-ARBA"/>
</dbReference>
<dbReference type="GO" id="GO:0009058">
    <property type="term" value="P:biosynthetic process"/>
    <property type="evidence" value="ECO:0007669"/>
    <property type="project" value="UniProtKB-ARBA"/>
</dbReference>
<dbReference type="CDD" id="cd00761">
    <property type="entry name" value="Glyco_tranf_GTA_type"/>
    <property type="match status" value="1"/>
</dbReference>
<dbReference type="Gene3D" id="3.90.550.10">
    <property type="entry name" value="Spore Coat Polysaccharide Biosynthesis Protein SpsA, Chain A"/>
    <property type="match status" value="2"/>
</dbReference>
<dbReference type="InterPro" id="IPR001173">
    <property type="entry name" value="Glyco_trans_2-like"/>
</dbReference>
<dbReference type="InterPro" id="IPR029044">
    <property type="entry name" value="Nucleotide-diphossugar_trans"/>
</dbReference>
<dbReference type="PANTHER" id="PTHR22916">
    <property type="entry name" value="GLYCOSYLTRANSFERASE"/>
    <property type="match status" value="1"/>
</dbReference>
<dbReference type="PANTHER" id="PTHR22916:SF3">
    <property type="entry name" value="UDP-GLCNAC:BETAGAL BETA-1,3-N-ACETYLGLUCOSAMINYLTRANSFERASE-LIKE PROTEIN 1"/>
    <property type="match status" value="1"/>
</dbReference>
<dbReference type="Pfam" id="PF00535">
    <property type="entry name" value="Glycos_transf_2"/>
    <property type="match status" value="2"/>
</dbReference>
<dbReference type="SUPFAM" id="SSF53448">
    <property type="entry name" value="Nucleotide-diphospho-sugar transferases"/>
    <property type="match status" value="2"/>
</dbReference>
<keyword id="KW-0328">Glycosyltransferase</keyword>
<keyword id="KW-0808">Transferase</keyword>
<sequence>MTTRKDKPLNIYHTLVSIIIPVYNGANYMKEAINSALAQTYKNIEIIVVNDGSKDNGETERVALSYGDKIRYFYKENGGCGSALNYGIKNMQGEYFSWLSHDDIYYPNKIEHQVDILNKLDNKDTIIYGGYELIDEKGNSLRYIKPDSVLPINKLNISLLPLLRGLIHGCSLLMPAKYFHEVGIFNEALPTTQDYDLWFKIFRVAPIHFDESILIKSRFHSEQGSKKISNHNEECNVLWSSFLHELTEEEMIKMEGSPYLFLTRTATFLSNNTPYKKACDLANTMAKQVLNDTKISVIIPVYNRINWAIEAIKSVLIQTHKNFEILIIDDGSTDDISELTAICKKDKRIKYFHKKNEGPAAARNLGIKNAIGKYIAFLDSDDLFYKDKIEIQLKFMEENNFIFSHTSYHKINEKGKYIESVHSGLFSGNVFPQVIQTCPIAMPTVMGTLTLFQENLFPENIRSGEDCCLWISIASKNSIGGIDKELSKVRISGGTNTFMDPNKYSVGLINITSYVLNDAYLSKFSPFTINLLLAAVTQLRLLENKNEDYKKSNISFFKNNYVIQKIRTYCFVTKILILLTITSIRQEGIRATISRIQRWLKKHI</sequence>
<protein>
    <recommendedName>
        <fullName>Uncharacterized glycosyltransferase RC0461</fullName>
        <ecNumber>2.4.-.-</ecNumber>
    </recommendedName>
</protein>
<name>Y461_RICCN</name>
<evidence type="ECO:0000305" key="1"/>